<organism>
    <name type="scientific">Penicillium oxalicum (strain 114-2 / CGMCC 5302)</name>
    <name type="common">Penicillium decumbens</name>
    <dbReference type="NCBI Taxonomy" id="933388"/>
    <lineage>
        <taxon>Eukaryota</taxon>
        <taxon>Fungi</taxon>
        <taxon>Dikarya</taxon>
        <taxon>Ascomycota</taxon>
        <taxon>Pezizomycotina</taxon>
        <taxon>Eurotiomycetes</taxon>
        <taxon>Eurotiomycetidae</taxon>
        <taxon>Eurotiales</taxon>
        <taxon>Aspergillaceae</taxon>
        <taxon>Penicillium</taxon>
    </lineage>
</organism>
<sequence>MSRRLDLDALDLSTKTIPAQAAIGTYMSSTIIKAPASSVWQAVNDTDSWPIWNTFCPGATIREQPDTTKSRSGRLQLGTKMTLHLNWNPRGTKPKQMDVGLVVTEFDPPIKGRETPGRIAWATDSSAKGFPSWLLYAERVTELHESEEWDGEECQSVTQVLSWESQRGPLAYVVRWFMGKNFKMCLRVQADDMTSFVEGQKL</sequence>
<reference key="1">
    <citation type="journal article" date="2013" name="PLoS ONE">
        <title>Genomic and secretomic analyses reveal unique features of the lignocellulolytic enzyme system of Penicillium decumbens.</title>
        <authorList>
            <person name="Liu G."/>
            <person name="Zhang L."/>
            <person name="Wei X."/>
            <person name="Zou G."/>
            <person name="Qin Y."/>
            <person name="Ma L."/>
            <person name="Li J."/>
            <person name="Zheng H."/>
            <person name="Wang S."/>
            <person name="Wang C."/>
            <person name="Xun L."/>
            <person name="Zhao G.-P."/>
            <person name="Zhou Z."/>
            <person name="Qu Y."/>
        </authorList>
    </citation>
    <scope>NUCLEOTIDE SEQUENCE [LARGE SCALE GENOMIC DNA]</scope>
    <source>
        <strain>114-2 / CGMCC 5302</strain>
    </source>
</reference>
<reference key="2">
    <citation type="journal article" date="2022" name="Mar. Drugs">
        <title>Identification of PKS-NRPS Hybrid Metabolites in Marine-Derived Penicillium oxalicum.</title>
        <authorList>
            <person name="Li H."/>
            <person name="Zhang W."/>
            <person name="Zhang X."/>
            <person name="Tang S."/>
            <person name="Men P."/>
            <person name="Xiong M."/>
            <person name="Li Z."/>
            <person name="Zhang Y."/>
            <person name="Huang X."/>
            <person name="Lu X."/>
        </authorList>
    </citation>
    <scope>FUNCTION</scope>
    <scope>DISRUPTION PHENOTYPE</scope>
</reference>
<dbReference type="EMBL" id="KB644408">
    <property type="protein sequence ID" value="EPS26307.1"/>
    <property type="molecule type" value="Genomic_DNA"/>
</dbReference>
<dbReference type="SMR" id="S8AWQ1"/>
<dbReference type="eggNOG" id="ENOG502S6PP">
    <property type="taxonomic scope" value="Eukaryota"/>
</dbReference>
<dbReference type="HOGENOM" id="CLU_069867_0_2_1"/>
<dbReference type="OrthoDB" id="509124at2759"/>
<dbReference type="PhylomeDB" id="S8AWQ1"/>
<dbReference type="Proteomes" id="UP000019376">
    <property type="component" value="Unassembled WGS sequence"/>
</dbReference>
<dbReference type="CDD" id="cd07822">
    <property type="entry name" value="SRPBCC_4"/>
    <property type="match status" value="1"/>
</dbReference>
<dbReference type="Gene3D" id="3.30.530.20">
    <property type="match status" value="1"/>
</dbReference>
<dbReference type="InterPro" id="IPR005031">
    <property type="entry name" value="COQ10_START"/>
</dbReference>
<dbReference type="InterPro" id="IPR023393">
    <property type="entry name" value="START-like_dom_sf"/>
</dbReference>
<dbReference type="Pfam" id="PF03364">
    <property type="entry name" value="Polyketide_cyc"/>
    <property type="match status" value="1"/>
</dbReference>
<dbReference type="SUPFAM" id="SSF55961">
    <property type="entry name" value="Bet v1-like"/>
    <property type="match status" value="1"/>
</dbReference>
<evidence type="ECO:0000269" key="1">
    <source>
    </source>
</evidence>
<evidence type="ECO:0000303" key="2">
    <source>
    </source>
</evidence>
<gene>
    <name evidence="2" type="primary">opdO</name>
    <name type="ORF">PDE_01243</name>
</gene>
<protein>
    <recommendedName>
        <fullName evidence="2">Oxopyrrolidines biosynthesis cluster protein O</fullName>
    </recommendedName>
</protein>
<proteinExistence type="predicted"/>
<keyword id="KW-1185">Reference proteome</keyword>
<name>OPDO_PENO1</name>
<comment type="function">
    <text evidence="1">Part of the gene cluster that mediates the biosynthesis of oxopyrrolidines, polyketide-amino acid hybrid compounds with feature structures of tetramic acid (PubMed:36005526). Does not seem to play a role in oxopyrrolidines A and B biosynthesis (PubMed:36005526).</text>
</comment>
<comment type="disruption phenotype">
    <text evidence="1">Does not affect the production of oxopyrrolidines A and B.</text>
</comment>
<feature type="chain" id="PRO_0000457058" description="Oxopyrrolidines biosynthesis cluster protein O">
    <location>
        <begin position="1"/>
        <end position="202"/>
    </location>
</feature>
<accession>S8AWQ1</accession>